<gene>
    <name evidence="1" type="primary">truB</name>
    <name type="ordered locus">SYNAS_26720</name>
    <name type="ORF">SYN_01783</name>
</gene>
<comment type="function">
    <text evidence="1">Responsible for synthesis of pseudouridine from uracil-55 in the psi GC loop of transfer RNAs.</text>
</comment>
<comment type="catalytic activity">
    <reaction evidence="1">
        <text>uridine(55) in tRNA = pseudouridine(55) in tRNA</text>
        <dbReference type="Rhea" id="RHEA:42532"/>
        <dbReference type="Rhea" id="RHEA-COMP:10101"/>
        <dbReference type="Rhea" id="RHEA-COMP:10102"/>
        <dbReference type="ChEBI" id="CHEBI:65314"/>
        <dbReference type="ChEBI" id="CHEBI:65315"/>
        <dbReference type="EC" id="5.4.99.25"/>
    </reaction>
</comment>
<comment type="similarity">
    <text evidence="1">Belongs to the pseudouridine synthase TruB family. Type 1 subfamily.</text>
</comment>
<feature type="chain" id="PRO_1000084704" description="tRNA pseudouridine synthase B">
    <location>
        <begin position="1"/>
        <end position="312"/>
    </location>
</feature>
<feature type="active site" description="Nucleophile" evidence="1">
    <location>
        <position position="38"/>
    </location>
</feature>
<keyword id="KW-0413">Isomerase</keyword>
<keyword id="KW-1185">Reference proteome</keyword>
<keyword id="KW-0819">tRNA processing</keyword>
<reference key="1">
    <citation type="journal article" date="2007" name="Proc. Natl. Acad. Sci. U.S.A.">
        <title>The genome of Syntrophus aciditrophicus: life at the thermodynamic limit of microbial growth.</title>
        <authorList>
            <person name="McInerney M.J."/>
            <person name="Rohlin L."/>
            <person name="Mouttaki H."/>
            <person name="Kim U."/>
            <person name="Krupp R.S."/>
            <person name="Rios-Hernandez L."/>
            <person name="Sieber J."/>
            <person name="Struchtemeyer C.G."/>
            <person name="Bhattacharyya A."/>
            <person name="Campbell J.W."/>
            <person name="Gunsalus R.P."/>
        </authorList>
    </citation>
    <scope>NUCLEOTIDE SEQUENCE [LARGE SCALE GENOMIC DNA]</scope>
    <source>
        <strain>SB</strain>
    </source>
</reference>
<evidence type="ECO:0000255" key="1">
    <source>
        <dbReference type="HAMAP-Rule" id="MF_01080"/>
    </source>
</evidence>
<name>TRUB_SYNAS</name>
<dbReference type="EC" id="5.4.99.25" evidence="1"/>
<dbReference type="EMBL" id="CP000252">
    <property type="protein sequence ID" value="ABC78551.1"/>
    <property type="molecule type" value="Genomic_DNA"/>
</dbReference>
<dbReference type="RefSeq" id="WP_011418570.1">
    <property type="nucleotide sequence ID" value="NC_007759.1"/>
</dbReference>
<dbReference type="SMR" id="Q2LWU1"/>
<dbReference type="FunCoup" id="Q2LWU1">
    <property type="interactions" value="461"/>
</dbReference>
<dbReference type="STRING" id="56780.SYN_01783"/>
<dbReference type="KEGG" id="sat:SYN_01783"/>
<dbReference type="eggNOG" id="COG0130">
    <property type="taxonomic scope" value="Bacteria"/>
</dbReference>
<dbReference type="HOGENOM" id="CLU_032087_0_1_7"/>
<dbReference type="InParanoid" id="Q2LWU1"/>
<dbReference type="OrthoDB" id="9802309at2"/>
<dbReference type="Proteomes" id="UP000001933">
    <property type="component" value="Chromosome"/>
</dbReference>
<dbReference type="GO" id="GO:0003723">
    <property type="term" value="F:RNA binding"/>
    <property type="evidence" value="ECO:0007669"/>
    <property type="project" value="InterPro"/>
</dbReference>
<dbReference type="GO" id="GO:0160148">
    <property type="term" value="F:tRNA pseudouridine(55) synthase activity"/>
    <property type="evidence" value="ECO:0007669"/>
    <property type="project" value="UniProtKB-EC"/>
</dbReference>
<dbReference type="GO" id="GO:1990481">
    <property type="term" value="P:mRNA pseudouridine synthesis"/>
    <property type="evidence" value="ECO:0007669"/>
    <property type="project" value="TreeGrafter"/>
</dbReference>
<dbReference type="GO" id="GO:0031119">
    <property type="term" value="P:tRNA pseudouridine synthesis"/>
    <property type="evidence" value="ECO:0007669"/>
    <property type="project" value="UniProtKB-UniRule"/>
</dbReference>
<dbReference type="CDD" id="cd02573">
    <property type="entry name" value="PseudoU_synth_EcTruB"/>
    <property type="match status" value="1"/>
</dbReference>
<dbReference type="Gene3D" id="3.30.2350.10">
    <property type="entry name" value="Pseudouridine synthase"/>
    <property type="match status" value="1"/>
</dbReference>
<dbReference type="HAMAP" id="MF_01080">
    <property type="entry name" value="TruB_bact"/>
    <property type="match status" value="1"/>
</dbReference>
<dbReference type="InterPro" id="IPR020103">
    <property type="entry name" value="PsdUridine_synth_cat_dom_sf"/>
</dbReference>
<dbReference type="InterPro" id="IPR002501">
    <property type="entry name" value="PsdUridine_synth_N"/>
</dbReference>
<dbReference type="InterPro" id="IPR014780">
    <property type="entry name" value="tRNA_psdUridine_synth_TruB"/>
</dbReference>
<dbReference type="InterPro" id="IPR032819">
    <property type="entry name" value="TruB_C"/>
</dbReference>
<dbReference type="NCBIfam" id="TIGR00431">
    <property type="entry name" value="TruB"/>
    <property type="match status" value="1"/>
</dbReference>
<dbReference type="PANTHER" id="PTHR13767:SF2">
    <property type="entry name" value="PSEUDOURIDYLATE SYNTHASE TRUB1"/>
    <property type="match status" value="1"/>
</dbReference>
<dbReference type="PANTHER" id="PTHR13767">
    <property type="entry name" value="TRNA-PSEUDOURIDINE SYNTHASE"/>
    <property type="match status" value="1"/>
</dbReference>
<dbReference type="Pfam" id="PF16198">
    <property type="entry name" value="TruB_C_2"/>
    <property type="match status" value="1"/>
</dbReference>
<dbReference type="Pfam" id="PF01509">
    <property type="entry name" value="TruB_N"/>
    <property type="match status" value="1"/>
</dbReference>
<dbReference type="SUPFAM" id="SSF55120">
    <property type="entry name" value="Pseudouridine synthase"/>
    <property type="match status" value="1"/>
</dbReference>
<sequence length="312" mass="34305">MDGILILDKSPGKTSQKVVQEVKRILGVRKAGHAGTLDPLATGVLPLCLNEATKLVQFLSLDDKEYRATMLLGVTTETMDIEGRITDRREPEVDEVRIREALQFFTGPISQEPPRYSAVKFKGRPLYSWARKGVDIALPPRTVQVYSSILEEIALPYVTFRVACSKGTYIRTLCADLGERLGCGACMSVLRRLRCGCFTLETAVSLEDIADGKGRETLLSRVIPLSDGLRNVAAIEISEELSGRIRDGFQPDGSTLREYHIPSLADGDMVKFLTSSGGLVAVARFLYASDQLAVSDMGQPAVRILRVFHDRA</sequence>
<protein>
    <recommendedName>
        <fullName evidence="1">tRNA pseudouridine synthase B</fullName>
        <ecNumber evidence="1">5.4.99.25</ecNumber>
    </recommendedName>
    <alternativeName>
        <fullName evidence="1">tRNA pseudouridine(55) synthase</fullName>
        <shortName evidence="1">Psi55 synthase</shortName>
    </alternativeName>
    <alternativeName>
        <fullName evidence="1">tRNA pseudouridylate synthase</fullName>
    </alternativeName>
    <alternativeName>
        <fullName evidence="1">tRNA-uridine isomerase</fullName>
    </alternativeName>
</protein>
<proteinExistence type="inferred from homology"/>
<organism>
    <name type="scientific">Syntrophus aciditrophicus (strain SB)</name>
    <dbReference type="NCBI Taxonomy" id="56780"/>
    <lineage>
        <taxon>Bacteria</taxon>
        <taxon>Pseudomonadati</taxon>
        <taxon>Thermodesulfobacteriota</taxon>
        <taxon>Syntrophia</taxon>
        <taxon>Syntrophales</taxon>
        <taxon>Syntrophaceae</taxon>
        <taxon>Syntrophus</taxon>
    </lineage>
</organism>
<accession>Q2LWU1</accession>